<protein>
    <recommendedName>
        <fullName>Potassium channel toxin alpha-KTx 23.2</fullName>
    </recommendedName>
    <alternativeName>
        <fullName>Toxin Vm23</fullName>
    </alternativeName>
    <alternativeName>
        <fullName>Toxin alpha-KTx 21.2</fullName>
    </alternativeName>
</protein>
<dbReference type="SMR" id="P0DJ32"/>
<dbReference type="GO" id="GO:0005576">
    <property type="term" value="C:extracellular region"/>
    <property type="evidence" value="ECO:0007669"/>
    <property type="project" value="UniProtKB-SubCell"/>
</dbReference>
<dbReference type="GO" id="GO:0008200">
    <property type="term" value="F:ion channel inhibitor activity"/>
    <property type="evidence" value="ECO:0007669"/>
    <property type="project" value="InterPro"/>
</dbReference>
<dbReference type="GO" id="GO:0015459">
    <property type="term" value="F:potassium channel regulator activity"/>
    <property type="evidence" value="ECO:0007669"/>
    <property type="project" value="UniProtKB-KW"/>
</dbReference>
<dbReference type="GO" id="GO:0090729">
    <property type="term" value="F:toxin activity"/>
    <property type="evidence" value="ECO:0007669"/>
    <property type="project" value="UniProtKB-KW"/>
</dbReference>
<dbReference type="Gene3D" id="3.30.30.10">
    <property type="entry name" value="Knottin, scorpion toxin-like"/>
    <property type="match status" value="1"/>
</dbReference>
<dbReference type="InterPro" id="IPR036574">
    <property type="entry name" value="Scorpion_toxin-like_sf"/>
</dbReference>
<dbReference type="InterPro" id="IPR001947">
    <property type="entry name" value="Scorpion_toxinS_K_inh"/>
</dbReference>
<dbReference type="Pfam" id="PF00451">
    <property type="entry name" value="Toxin_2"/>
    <property type="match status" value="1"/>
</dbReference>
<dbReference type="PRINTS" id="PR00286">
    <property type="entry name" value="CHARYBDTOXIN"/>
</dbReference>
<dbReference type="SUPFAM" id="SSF57095">
    <property type="entry name" value="Scorpion toxin-like"/>
    <property type="match status" value="1"/>
</dbReference>
<dbReference type="PROSITE" id="PS01138">
    <property type="entry name" value="SCORP_SHORT_TOXIN"/>
    <property type="match status" value="1"/>
</dbReference>
<comment type="function">
    <text evidence="2">Selectively and irreversibly binds (K(d)=2.9 pM) and blocks Kv1.3/KCNA3 potassium channels of human T-lymphocytes. Weakly blocks Kv1.2/KCNA2 (9%).</text>
</comment>
<comment type="subcellular location">
    <subcellularLocation>
        <location>Secreted</location>
    </subcellularLocation>
</comment>
<comment type="tissue specificity">
    <text>Expressed by the venom gland.</text>
</comment>
<comment type="domain">
    <text evidence="3">Has the structural arrangement of an alpha-helix connected to antiparallel beta-sheets by disulfide bonds (CS-alpha/beta).</text>
</comment>
<comment type="miscellaneous">
    <text>Negative results: does not block hKCa3.1/KCNN4, and mKv1.1/KCNA1 channels (Ref.1).</text>
</comment>
<comment type="miscellaneous">
    <text>Has been patented as lead compound, candidates for the treatment of various autoimmune diseases and diagnostic applications (Ref.1).</text>
</comment>
<comment type="similarity">
    <text evidence="3">Belongs to the short scorpion toxin superfamily. Potassium channel inhibitor family. Alpha-KTx 23 subfamily.</text>
</comment>
<sequence length="35" mass="3674">AAAISCVGSKECLPKCKAQGCKSGKCMNKKCKCYC</sequence>
<keyword id="KW-0903">Direct protein sequencing</keyword>
<keyword id="KW-1015">Disulfide bond</keyword>
<keyword id="KW-0872">Ion channel impairing toxin</keyword>
<keyword id="KW-0528">Neurotoxin</keyword>
<keyword id="KW-0632">Potassium channel impairing toxin</keyword>
<keyword id="KW-0964">Secreted</keyword>
<keyword id="KW-0800">Toxin</keyword>
<keyword id="KW-1220">Voltage-gated potassium channel impairing toxin</keyword>
<evidence type="ECO:0000250" key="1"/>
<evidence type="ECO:0000269" key="2">
    <source ref="1"/>
</evidence>
<evidence type="ECO:0000305" key="3"/>
<proteinExistence type="evidence at protein level"/>
<accession>P0DJ32</accession>
<reference key="1">
    <citation type="patent" date="2011-03-10" number="US0059064">
        <title>Vm23 and Vm24, two scorpion peptides that block human T-lymphocyte potassium channels sub-type K(v)1.3 w/high selectivity and decrease the in vivo DTH responses in rats.</title>
        <authorList>
            <person name="Possani L.D."/>
            <person name="Gurrola-Briones G."/>
            <person name="Salas-Castillo S.P."/>
            <person name="Batista C.V."/>
            <person name="Varga Z."/>
            <person name="Panyi G."/>
            <person name="Caspar R."/>
        </authorList>
    </citation>
    <scope>PROTEIN SEQUENCE</scope>
    <scope>FUNCTION</scope>
    <source>
        <tissue>Venom</tissue>
    </source>
</reference>
<organism>
    <name type="scientific">Vaejovis mexicanus smithi</name>
    <name type="common">Mexican scorpion</name>
    <name type="synonym">Vaejovis smithi</name>
    <dbReference type="NCBI Taxonomy" id="1562928"/>
    <lineage>
        <taxon>Eukaryota</taxon>
        <taxon>Metazoa</taxon>
        <taxon>Ecdysozoa</taxon>
        <taxon>Arthropoda</taxon>
        <taxon>Chelicerata</taxon>
        <taxon>Arachnida</taxon>
        <taxon>Scorpiones</taxon>
        <taxon>Iurida</taxon>
        <taxon>Chactoidea</taxon>
        <taxon>Vaejovidae</taxon>
        <taxon>Vaejovis</taxon>
    </lineage>
</organism>
<name>KA232_VAEMS</name>
<feature type="chain" id="PRO_0000415930" description="Potassium channel toxin alpha-KTx 23.2">
    <location>
        <begin position="1"/>
        <end position="35"/>
    </location>
</feature>
<feature type="disulfide bond" evidence="1">
    <location>
        <begin position="6"/>
        <end position="26"/>
    </location>
</feature>
<feature type="disulfide bond" evidence="1">
    <location>
        <begin position="12"/>
        <end position="31"/>
    </location>
</feature>
<feature type="disulfide bond" evidence="1">
    <location>
        <begin position="16"/>
        <end position="33"/>
    </location>
</feature>